<gene>
    <name type="primary">SHOC2</name>
    <name type="ORF">RCJMB04_1b13</name>
</gene>
<protein>
    <recommendedName>
        <fullName>Leucine-rich repeat protein SHOC-2</fullName>
    </recommendedName>
    <alternativeName>
        <fullName>Protein soc-2 homolog</fullName>
    </alternativeName>
    <alternativeName>
        <fullName>Protein sur-8 homolog</fullName>
    </alternativeName>
</protein>
<reference key="1">
    <citation type="journal article" date="2005" name="Genome Biol.">
        <title>Full-length cDNAs from chicken bursal lymphocytes to facilitate gene function analysis.</title>
        <authorList>
            <person name="Caldwell R.B."/>
            <person name="Kierzek A.M."/>
            <person name="Arakawa H."/>
            <person name="Bezzubov Y."/>
            <person name="Zaim J."/>
            <person name="Fiedler P."/>
            <person name="Kutter S."/>
            <person name="Blagodatski A."/>
            <person name="Kostovska D."/>
            <person name="Koter M."/>
            <person name="Plachy J."/>
            <person name="Carninci P."/>
            <person name="Hayashizaki Y."/>
            <person name="Buerstedde J.-M."/>
        </authorList>
    </citation>
    <scope>NUCLEOTIDE SEQUENCE [LARGE SCALE MRNA]</scope>
    <source>
        <strain>CB</strain>
        <tissue>Bursa of Fabricius</tissue>
    </source>
</reference>
<evidence type="ECO:0000250" key="1"/>
<evidence type="ECO:0000250" key="2">
    <source>
        <dbReference type="UniProtKB" id="Q9UQ13"/>
    </source>
</evidence>
<evidence type="ECO:0000256" key="3">
    <source>
        <dbReference type="SAM" id="MobiDB-lite"/>
    </source>
</evidence>
<evidence type="ECO:0000305" key="4"/>
<accession>Q5F4C4</accession>
<sequence>MSSNLGKEKDCKEKDPKVPSSKEREKESKASGGFGKESKEKEPKTKGKDAKDGKKDSSSTQPGVAFSVDNTIKRPNPATGTRKKSSNAEVIKELNKCREENSMRLDLAKRSIHMLPSAVKELTQLTELYLYSNKLQSLPAEVGCLVNLVTLALSENSLTSLPDSLDNLKKLRMLDLRHNKLREIPSVVYRLTSLATLYLRFNRITTVEKDIKTLSKLTMLSIRENKIKQLPAEIGELCNLITLDVAHNQLEHLPEEIGSCTQITNLDLQHNELLDLPETIGNLSSLSRLGLRYNRLSAIPKSLAKCSELDELNLENNNISTLPEGLLSSLVKLTSLTLARNCFQSYPVGGPSQFSTIYSLNMEHNRINKIPFGIFSRAKVLSKLNMKDNQLTSLPLDFGTWTSMVELNLATNQLTKIPEDVSGLVSLEVLILSNNLLKKLPHGIGNLRKLRELDLEENKLESLPNEIAYLKDLQKLVLTNNQLTTLPRGIGHLTNLTHLGLGENLLTHLPEEIGKILFFFFFNVSFLFV</sequence>
<organism>
    <name type="scientific">Gallus gallus</name>
    <name type="common">Chicken</name>
    <dbReference type="NCBI Taxonomy" id="9031"/>
    <lineage>
        <taxon>Eukaryota</taxon>
        <taxon>Metazoa</taxon>
        <taxon>Chordata</taxon>
        <taxon>Craniata</taxon>
        <taxon>Vertebrata</taxon>
        <taxon>Euteleostomi</taxon>
        <taxon>Archelosauria</taxon>
        <taxon>Archosauria</taxon>
        <taxon>Dinosauria</taxon>
        <taxon>Saurischia</taxon>
        <taxon>Theropoda</taxon>
        <taxon>Coelurosauria</taxon>
        <taxon>Aves</taxon>
        <taxon>Neognathae</taxon>
        <taxon>Galloanserae</taxon>
        <taxon>Galliformes</taxon>
        <taxon>Phasianidae</taxon>
        <taxon>Phasianinae</taxon>
        <taxon>Gallus</taxon>
    </lineage>
</organism>
<proteinExistence type="evidence at transcript level"/>
<dbReference type="EMBL" id="AJ851376">
    <property type="protein sequence ID" value="CAH65010.1"/>
    <property type="molecule type" value="mRNA"/>
</dbReference>
<dbReference type="RefSeq" id="NP_001026407.1">
    <property type="nucleotide sequence ID" value="NM_001031236.1"/>
</dbReference>
<dbReference type="SMR" id="Q5F4C4"/>
<dbReference type="FunCoup" id="Q5F4C4">
    <property type="interactions" value="1885"/>
</dbReference>
<dbReference type="STRING" id="9031.ENSGALP00000014251"/>
<dbReference type="PaxDb" id="9031-ENSGALP00000014251"/>
<dbReference type="KEGG" id="gga:423894"/>
<dbReference type="VEuPathDB" id="HostDB:geneid_423894"/>
<dbReference type="eggNOG" id="KOG0619">
    <property type="taxonomic scope" value="Eukaryota"/>
</dbReference>
<dbReference type="InParanoid" id="Q5F4C4"/>
<dbReference type="OrthoDB" id="676979at2759"/>
<dbReference type="PhylomeDB" id="Q5F4C4"/>
<dbReference type="PRO" id="PR:Q5F4C4"/>
<dbReference type="Proteomes" id="UP000000539">
    <property type="component" value="Unassembled WGS sequence"/>
</dbReference>
<dbReference type="GO" id="GO:0005737">
    <property type="term" value="C:cytoplasm"/>
    <property type="evidence" value="ECO:0000250"/>
    <property type="project" value="UniProtKB"/>
</dbReference>
<dbReference type="GO" id="GO:0005634">
    <property type="term" value="C:nucleus"/>
    <property type="evidence" value="ECO:0000250"/>
    <property type="project" value="UniProtKB"/>
</dbReference>
<dbReference type="GO" id="GO:0000164">
    <property type="term" value="C:protein phosphatase type 1 complex"/>
    <property type="evidence" value="ECO:0000250"/>
    <property type="project" value="UniProtKB"/>
</dbReference>
<dbReference type="GO" id="GO:0019903">
    <property type="term" value="F:protein phosphatase binding"/>
    <property type="evidence" value="ECO:0000250"/>
    <property type="project" value="UniProtKB"/>
</dbReference>
<dbReference type="GO" id="GO:0005225">
    <property type="term" value="F:volume-sensitive anion channel activity"/>
    <property type="evidence" value="ECO:0000318"/>
    <property type="project" value="GO_Central"/>
</dbReference>
<dbReference type="GO" id="GO:0140361">
    <property type="term" value="P:cyclic-GMP-AMP transmembrane import across plasma membrane"/>
    <property type="evidence" value="ECO:0000318"/>
    <property type="project" value="GO_Central"/>
</dbReference>
<dbReference type="GO" id="GO:0035556">
    <property type="term" value="P:intracellular signal transduction"/>
    <property type="evidence" value="ECO:0000318"/>
    <property type="project" value="GO_Central"/>
</dbReference>
<dbReference type="GO" id="GO:0046579">
    <property type="term" value="P:positive regulation of Ras protein signal transduction"/>
    <property type="evidence" value="ECO:0000250"/>
    <property type="project" value="UniProtKB"/>
</dbReference>
<dbReference type="FunFam" id="3.80.10.10:FF:000115">
    <property type="entry name" value="leucine-rich repeat protein SHOC-2"/>
    <property type="match status" value="1"/>
</dbReference>
<dbReference type="FunFam" id="3.80.10.10:FF:000044">
    <property type="entry name" value="Putative leucine-rich repeat protein shoc-2"/>
    <property type="match status" value="1"/>
</dbReference>
<dbReference type="FunFam" id="3.80.10.10:FF:000093">
    <property type="entry name" value="Putative leucine-rich repeat protein shoc-2"/>
    <property type="match status" value="1"/>
</dbReference>
<dbReference type="Gene3D" id="3.80.10.10">
    <property type="entry name" value="Ribonuclease Inhibitor"/>
    <property type="match status" value="4"/>
</dbReference>
<dbReference type="InterPro" id="IPR001611">
    <property type="entry name" value="Leu-rich_rpt"/>
</dbReference>
<dbReference type="InterPro" id="IPR003591">
    <property type="entry name" value="Leu-rich_rpt_typical-subtyp"/>
</dbReference>
<dbReference type="InterPro" id="IPR032675">
    <property type="entry name" value="LRR_dom_sf"/>
</dbReference>
<dbReference type="InterPro" id="IPR050216">
    <property type="entry name" value="LRR_domain-containing"/>
</dbReference>
<dbReference type="InterPro" id="IPR055414">
    <property type="entry name" value="LRR_R13L4/SHOC2-like"/>
</dbReference>
<dbReference type="PANTHER" id="PTHR48051">
    <property type="match status" value="1"/>
</dbReference>
<dbReference type="PANTHER" id="PTHR48051:SF33">
    <property type="entry name" value="NON-SPECIFIC SERINE_THREONINE PROTEIN KINASE"/>
    <property type="match status" value="1"/>
</dbReference>
<dbReference type="Pfam" id="PF23598">
    <property type="entry name" value="LRR_14"/>
    <property type="match status" value="2"/>
</dbReference>
<dbReference type="Pfam" id="PF13855">
    <property type="entry name" value="LRR_8"/>
    <property type="match status" value="1"/>
</dbReference>
<dbReference type="SMART" id="SM00364">
    <property type="entry name" value="LRR_BAC"/>
    <property type="match status" value="12"/>
</dbReference>
<dbReference type="SMART" id="SM00365">
    <property type="entry name" value="LRR_SD22"/>
    <property type="match status" value="8"/>
</dbReference>
<dbReference type="SMART" id="SM00369">
    <property type="entry name" value="LRR_TYP"/>
    <property type="match status" value="15"/>
</dbReference>
<dbReference type="SUPFAM" id="SSF52058">
    <property type="entry name" value="L domain-like"/>
    <property type="match status" value="2"/>
</dbReference>
<dbReference type="PROSITE" id="PS51450">
    <property type="entry name" value="LRR"/>
    <property type="match status" value="17"/>
</dbReference>
<keyword id="KW-0963">Cytoplasm</keyword>
<keyword id="KW-0433">Leucine-rich repeat</keyword>
<keyword id="KW-0539">Nucleus</keyword>
<keyword id="KW-1185">Reference proteome</keyword>
<keyword id="KW-0677">Repeat</keyword>
<name>SHOC2_CHICK</name>
<comment type="function">
    <text evidence="2">Core component of the SHOC2-MRAS-PP1c (SMP) holophosphatase complex that regulates activation of the MAPK pathway (By similarity). Acts as a scaffolding protein in the SMP complex (By similarity). The SMP complex specifically dephosphorylates the inhibitory phosphorylation Raf kinases, stimulating their kinase activities (By similarity). The SMP complex enhances the dephosphorylation activity and substrate specificity of PP1c (By similarity).</text>
</comment>
<comment type="subcellular location">
    <subcellularLocation>
        <location evidence="1">Cytoplasm</location>
    </subcellularLocation>
    <subcellularLocation>
        <location evidence="1">Nucleus</location>
    </subcellularLocation>
</comment>
<comment type="similarity">
    <text evidence="4">Belongs to the SHOC2 family.</text>
</comment>
<feature type="chain" id="PRO_0000385627" description="Leucine-rich repeat protein SHOC-2">
    <location>
        <begin position="1"/>
        <end position="529"/>
    </location>
</feature>
<feature type="repeat" description="LRR 1">
    <location>
        <begin position="99"/>
        <end position="122"/>
    </location>
</feature>
<feature type="repeat" description="LRR 2">
    <location>
        <begin position="123"/>
        <end position="145"/>
    </location>
</feature>
<feature type="repeat" description="LRR 3">
    <location>
        <begin position="146"/>
        <end position="168"/>
    </location>
</feature>
<feature type="repeat" description="LRR 4">
    <location>
        <begin position="169"/>
        <end position="191"/>
    </location>
</feature>
<feature type="repeat" description="LRR 5">
    <location>
        <begin position="193"/>
        <end position="214"/>
    </location>
</feature>
<feature type="repeat" description="LRR 6">
    <location>
        <begin position="215"/>
        <end position="237"/>
    </location>
</feature>
<feature type="repeat" description="LRR 7">
    <location>
        <begin position="239"/>
        <end position="260"/>
    </location>
</feature>
<feature type="repeat" description="LRR 8">
    <location>
        <begin position="262"/>
        <end position="283"/>
    </location>
</feature>
<feature type="repeat" description="LRR 9">
    <location>
        <begin position="284"/>
        <end position="306"/>
    </location>
</feature>
<feature type="repeat" description="LRR 10">
    <location>
        <begin position="307"/>
        <end position="329"/>
    </location>
</feature>
<feature type="repeat" description="LRR 11">
    <location>
        <begin position="331"/>
        <end position="353"/>
    </location>
</feature>
<feature type="repeat" description="LRR 12">
    <location>
        <begin position="354"/>
        <end position="377"/>
    </location>
</feature>
<feature type="repeat" description="LRR 13">
    <location>
        <begin position="379"/>
        <end position="400"/>
    </location>
</feature>
<feature type="repeat" description="LRR 14">
    <location>
        <begin position="401"/>
        <end position="424"/>
    </location>
</feature>
<feature type="repeat" description="LRR 15">
    <location>
        <begin position="425"/>
        <end position="447"/>
    </location>
</feature>
<feature type="repeat" description="LRR 16">
    <location>
        <begin position="448"/>
        <end position="471"/>
    </location>
</feature>
<feature type="repeat" description="LRR 17">
    <location>
        <begin position="473"/>
        <end position="493"/>
    </location>
</feature>
<feature type="repeat" description="LRR 18">
    <location>
        <begin position="494"/>
        <end position="516"/>
    </location>
</feature>
<feature type="region of interest" description="Disordered" evidence="3">
    <location>
        <begin position="1"/>
        <end position="87"/>
    </location>
</feature>
<feature type="compositionally biased region" description="Basic and acidic residues" evidence="3">
    <location>
        <begin position="1"/>
        <end position="29"/>
    </location>
</feature>
<feature type="compositionally biased region" description="Basic and acidic residues" evidence="3">
    <location>
        <begin position="36"/>
        <end position="57"/>
    </location>
</feature>